<gene>
    <name evidence="1" type="primary">clpX</name>
    <name type="ordered locus">OCAR_5909</name>
    <name type="ordered locus">OCA5_c21100</name>
</gene>
<keyword id="KW-0067">ATP-binding</keyword>
<keyword id="KW-0143">Chaperone</keyword>
<keyword id="KW-0479">Metal-binding</keyword>
<keyword id="KW-0547">Nucleotide-binding</keyword>
<keyword id="KW-1185">Reference proteome</keyword>
<keyword id="KW-0862">Zinc</keyword>
<feature type="chain" id="PRO_1000097977" description="ATP-dependent Clp protease ATP-binding subunit ClpX">
    <location>
        <begin position="1"/>
        <end position="424"/>
    </location>
</feature>
<feature type="domain" description="ClpX-type ZB" evidence="2">
    <location>
        <begin position="3"/>
        <end position="56"/>
    </location>
</feature>
<feature type="binding site" evidence="2">
    <location>
        <position position="15"/>
    </location>
    <ligand>
        <name>Zn(2+)</name>
        <dbReference type="ChEBI" id="CHEBI:29105"/>
    </ligand>
</feature>
<feature type="binding site" evidence="2">
    <location>
        <position position="18"/>
    </location>
    <ligand>
        <name>Zn(2+)</name>
        <dbReference type="ChEBI" id="CHEBI:29105"/>
    </ligand>
</feature>
<feature type="binding site" evidence="2">
    <location>
        <position position="37"/>
    </location>
    <ligand>
        <name>Zn(2+)</name>
        <dbReference type="ChEBI" id="CHEBI:29105"/>
    </ligand>
</feature>
<feature type="binding site" evidence="2">
    <location>
        <position position="40"/>
    </location>
    <ligand>
        <name>Zn(2+)</name>
        <dbReference type="ChEBI" id="CHEBI:29105"/>
    </ligand>
</feature>
<feature type="binding site" evidence="1">
    <location>
        <begin position="119"/>
        <end position="126"/>
    </location>
    <ligand>
        <name>ATP</name>
        <dbReference type="ChEBI" id="CHEBI:30616"/>
    </ligand>
</feature>
<accession>B6JGU8</accession>
<accession>F8BX38</accession>
<protein>
    <recommendedName>
        <fullName evidence="1">ATP-dependent Clp protease ATP-binding subunit ClpX</fullName>
    </recommendedName>
</protein>
<sequence>MSKVGTGDSKNTLYCSFCGKSQHEVRKLIAGPTVFICDECVELCMDIIREENKSSLVKSRDGIPTPKEICKVLDDYVIGQAHAKKVLSVAVHNHYKRLNHQTKHNDVELAKSNILLIGPTGSGKTLLAQTLARILDVPFTMADATTLTEAGYVGEDVENIILKLLQAADYNVERAQRGIVYIDEIDKISRKSDNPSITRDVSGEGVQQALLKIMEGTVASVPPQGGRKHPQQEFLQVDTTNILFICGGAFAGLEKIISSRGRTTSIGFAASVLAPEDRRTGEIFREVEPEDLLKYGLIPEFVGRLPVVATLEDLDEASLKKILVEPKNALVKQYQRLFEMENVELTFADEALGAVARKAIERKTGARGLRSILESILLETMFDLPGLEGVEEVVISREVVEATARPLYIYADRTDRAGESSASA</sequence>
<proteinExistence type="inferred from homology"/>
<evidence type="ECO:0000255" key="1">
    <source>
        <dbReference type="HAMAP-Rule" id="MF_00175"/>
    </source>
</evidence>
<evidence type="ECO:0000255" key="2">
    <source>
        <dbReference type="PROSITE-ProRule" id="PRU01250"/>
    </source>
</evidence>
<dbReference type="EMBL" id="CP001196">
    <property type="protein sequence ID" value="ACI93032.1"/>
    <property type="molecule type" value="Genomic_DNA"/>
</dbReference>
<dbReference type="EMBL" id="CP002826">
    <property type="protein sequence ID" value="AEI06815.1"/>
    <property type="molecule type" value="Genomic_DNA"/>
</dbReference>
<dbReference type="RefSeq" id="WP_012563059.1">
    <property type="nucleotide sequence ID" value="NC_015684.1"/>
</dbReference>
<dbReference type="SMR" id="B6JGU8"/>
<dbReference type="STRING" id="504832.OCA5_c21100"/>
<dbReference type="KEGG" id="oca:OCAR_5909"/>
<dbReference type="KEGG" id="ocg:OCA5_c21100"/>
<dbReference type="PATRIC" id="fig|504832.7.peg.2231"/>
<dbReference type="eggNOG" id="COG1219">
    <property type="taxonomic scope" value="Bacteria"/>
</dbReference>
<dbReference type="HOGENOM" id="CLU_014218_8_2_5"/>
<dbReference type="OrthoDB" id="9804062at2"/>
<dbReference type="Proteomes" id="UP000007730">
    <property type="component" value="Chromosome"/>
</dbReference>
<dbReference type="GO" id="GO:0009376">
    <property type="term" value="C:HslUV protease complex"/>
    <property type="evidence" value="ECO:0007669"/>
    <property type="project" value="TreeGrafter"/>
</dbReference>
<dbReference type="GO" id="GO:0005524">
    <property type="term" value="F:ATP binding"/>
    <property type="evidence" value="ECO:0007669"/>
    <property type="project" value="UniProtKB-UniRule"/>
</dbReference>
<dbReference type="GO" id="GO:0016887">
    <property type="term" value="F:ATP hydrolysis activity"/>
    <property type="evidence" value="ECO:0007669"/>
    <property type="project" value="InterPro"/>
</dbReference>
<dbReference type="GO" id="GO:0140662">
    <property type="term" value="F:ATP-dependent protein folding chaperone"/>
    <property type="evidence" value="ECO:0007669"/>
    <property type="project" value="InterPro"/>
</dbReference>
<dbReference type="GO" id="GO:0046983">
    <property type="term" value="F:protein dimerization activity"/>
    <property type="evidence" value="ECO:0007669"/>
    <property type="project" value="InterPro"/>
</dbReference>
<dbReference type="GO" id="GO:0051082">
    <property type="term" value="F:unfolded protein binding"/>
    <property type="evidence" value="ECO:0007669"/>
    <property type="project" value="UniProtKB-UniRule"/>
</dbReference>
<dbReference type="GO" id="GO:0008270">
    <property type="term" value="F:zinc ion binding"/>
    <property type="evidence" value="ECO:0007669"/>
    <property type="project" value="InterPro"/>
</dbReference>
<dbReference type="GO" id="GO:0051301">
    <property type="term" value="P:cell division"/>
    <property type="evidence" value="ECO:0007669"/>
    <property type="project" value="TreeGrafter"/>
</dbReference>
<dbReference type="GO" id="GO:0051603">
    <property type="term" value="P:proteolysis involved in protein catabolic process"/>
    <property type="evidence" value="ECO:0007669"/>
    <property type="project" value="TreeGrafter"/>
</dbReference>
<dbReference type="CDD" id="cd19497">
    <property type="entry name" value="RecA-like_ClpX"/>
    <property type="match status" value="1"/>
</dbReference>
<dbReference type="FunFam" id="1.10.8.60:FF:000002">
    <property type="entry name" value="ATP-dependent Clp protease ATP-binding subunit ClpX"/>
    <property type="match status" value="1"/>
</dbReference>
<dbReference type="FunFam" id="3.40.50.300:FF:000005">
    <property type="entry name" value="ATP-dependent Clp protease ATP-binding subunit ClpX"/>
    <property type="match status" value="1"/>
</dbReference>
<dbReference type="Gene3D" id="1.10.8.60">
    <property type="match status" value="1"/>
</dbReference>
<dbReference type="Gene3D" id="6.20.220.10">
    <property type="entry name" value="ClpX chaperone, C4-type zinc finger domain"/>
    <property type="match status" value="1"/>
</dbReference>
<dbReference type="Gene3D" id="3.40.50.300">
    <property type="entry name" value="P-loop containing nucleotide triphosphate hydrolases"/>
    <property type="match status" value="1"/>
</dbReference>
<dbReference type="HAMAP" id="MF_00175">
    <property type="entry name" value="ClpX"/>
    <property type="match status" value="1"/>
</dbReference>
<dbReference type="InterPro" id="IPR003593">
    <property type="entry name" value="AAA+_ATPase"/>
</dbReference>
<dbReference type="InterPro" id="IPR050052">
    <property type="entry name" value="ATP-dep_Clp_protease_ClpX"/>
</dbReference>
<dbReference type="InterPro" id="IPR003959">
    <property type="entry name" value="ATPase_AAA_core"/>
</dbReference>
<dbReference type="InterPro" id="IPR019489">
    <property type="entry name" value="Clp_ATPase_C"/>
</dbReference>
<dbReference type="InterPro" id="IPR004487">
    <property type="entry name" value="Clp_protease_ATP-bd_su_ClpX"/>
</dbReference>
<dbReference type="InterPro" id="IPR046425">
    <property type="entry name" value="ClpX_bact"/>
</dbReference>
<dbReference type="InterPro" id="IPR027417">
    <property type="entry name" value="P-loop_NTPase"/>
</dbReference>
<dbReference type="InterPro" id="IPR010603">
    <property type="entry name" value="Znf_CppX_C4"/>
</dbReference>
<dbReference type="InterPro" id="IPR038366">
    <property type="entry name" value="Znf_CppX_C4_sf"/>
</dbReference>
<dbReference type="NCBIfam" id="TIGR00382">
    <property type="entry name" value="clpX"/>
    <property type="match status" value="1"/>
</dbReference>
<dbReference type="NCBIfam" id="NF003745">
    <property type="entry name" value="PRK05342.1"/>
    <property type="match status" value="1"/>
</dbReference>
<dbReference type="PANTHER" id="PTHR48102:SF7">
    <property type="entry name" value="ATP-DEPENDENT CLP PROTEASE ATP-BINDING SUBUNIT CLPX-LIKE, MITOCHONDRIAL"/>
    <property type="match status" value="1"/>
</dbReference>
<dbReference type="PANTHER" id="PTHR48102">
    <property type="entry name" value="ATP-DEPENDENT CLP PROTEASE ATP-BINDING SUBUNIT CLPX-LIKE, MITOCHONDRIAL-RELATED"/>
    <property type="match status" value="1"/>
</dbReference>
<dbReference type="Pfam" id="PF07724">
    <property type="entry name" value="AAA_2"/>
    <property type="match status" value="1"/>
</dbReference>
<dbReference type="Pfam" id="PF10431">
    <property type="entry name" value="ClpB_D2-small"/>
    <property type="match status" value="1"/>
</dbReference>
<dbReference type="Pfam" id="PF06689">
    <property type="entry name" value="zf-C4_ClpX"/>
    <property type="match status" value="1"/>
</dbReference>
<dbReference type="SMART" id="SM00382">
    <property type="entry name" value="AAA"/>
    <property type="match status" value="1"/>
</dbReference>
<dbReference type="SMART" id="SM01086">
    <property type="entry name" value="ClpB_D2-small"/>
    <property type="match status" value="1"/>
</dbReference>
<dbReference type="SMART" id="SM00994">
    <property type="entry name" value="zf-C4_ClpX"/>
    <property type="match status" value="1"/>
</dbReference>
<dbReference type="SUPFAM" id="SSF57716">
    <property type="entry name" value="Glucocorticoid receptor-like (DNA-binding domain)"/>
    <property type="match status" value="1"/>
</dbReference>
<dbReference type="SUPFAM" id="SSF52540">
    <property type="entry name" value="P-loop containing nucleoside triphosphate hydrolases"/>
    <property type="match status" value="1"/>
</dbReference>
<dbReference type="PROSITE" id="PS51902">
    <property type="entry name" value="CLPX_ZB"/>
    <property type="match status" value="1"/>
</dbReference>
<name>CLPX_AFIC5</name>
<reference key="1">
    <citation type="journal article" date="2008" name="J. Bacteriol.">
        <title>Genome sequence of the chemolithoautotrophic bacterium Oligotropha carboxidovorans OM5T.</title>
        <authorList>
            <person name="Paul D."/>
            <person name="Bridges S."/>
            <person name="Burgess S.C."/>
            <person name="Dandass Y."/>
            <person name="Lawrence M.L."/>
        </authorList>
    </citation>
    <scope>NUCLEOTIDE SEQUENCE [LARGE SCALE GENOMIC DNA]</scope>
    <source>
        <strain>ATCC 49405 / DSM 1227 / KCTC 32145 / OM5</strain>
    </source>
</reference>
<reference key="2">
    <citation type="journal article" date="2011" name="J. Bacteriol.">
        <title>Complete genome sequences of the chemolithoautotrophic Oligotropha carboxidovorans strains OM4 and OM5.</title>
        <authorList>
            <person name="Volland S."/>
            <person name="Rachinger M."/>
            <person name="Strittmatter A."/>
            <person name="Daniel R."/>
            <person name="Gottschalk G."/>
            <person name="Meyer O."/>
        </authorList>
    </citation>
    <scope>NUCLEOTIDE SEQUENCE [LARGE SCALE GENOMIC DNA]</scope>
    <source>
        <strain>ATCC 49405 / DSM 1227 / KCTC 32145 / OM5</strain>
    </source>
</reference>
<organism>
    <name type="scientific">Afipia carboxidovorans (strain ATCC 49405 / DSM 1227 / KCTC 32145 / OM5)</name>
    <name type="common">Oligotropha carboxidovorans</name>
    <dbReference type="NCBI Taxonomy" id="504832"/>
    <lineage>
        <taxon>Bacteria</taxon>
        <taxon>Pseudomonadati</taxon>
        <taxon>Pseudomonadota</taxon>
        <taxon>Alphaproteobacteria</taxon>
        <taxon>Hyphomicrobiales</taxon>
        <taxon>Nitrobacteraceae</taxon>
        <taxon>Afipia</taxon>
    </lineage>
</organism>
<comment type="function">
    <text evidence="1">ATP-dependent specificity component of the Clp protease. It directs the protease to specific substrates. Can perform chaperone functions in the absence of ClpP.</text>
</comment>
<comment type="subunit">
    <text evidence="1">Component of the ClpX-ClpP complex. Forms a hexameric ring that, in the presence of ATP, binds to fourteen ClpP subunits assembled into a disk-like structure with a central cavity, resembling the structure of eukaryotic proteasomes.</text>
</comment>
<comment type="similarity">
    <text evidence="1">Belongs to the ClpX chaperone family.</text>
</comment>